<sequence length="63" mass="7056">MPVPKRKTSPSRRGKRRSHDGLRPENVIVNKTTGEFQRSHHVSLDGFYNGRRVLSPKGKAGSS</sequence>
<dbReference type="EMBL" id="CP000237">
    <property type="protein sequence ID" value="ABD45901.1"/>
    <property type="molecule type" value="Genomic_DNA"/>
</dbReference>
<dbReference type="RefSeq" id="WP_011452017.1">
    <property type="nucleotide sequence ID" value="NC_007798.1"/>
</dbReference>
<dbReference type="SMR" id="Q2GDD5"/>
<dbReference type="STRING" id="222891.NSE_0633"/>
<dbReference type="KEGG" id="nse:NSE_0633"/>
<dbReference type="eggNOG" id="COG0333">
    <property type="taxonomic scope" value="Bacteria"/>
</dbReference>
<dbReference type="HOGENOM" id="CLU_129084_2_0_5"/>
<dbReference type="OrthoDB" id="9801927at2"/>
<dbReference type="Proteomes" id="UP000001942">
    <property type="component" value="Chromosome"/>
</dbReference>
<dbReference type="GO" id="GO:0015934">
    <property type="term" value="C:large ribosomal subunit"/>
    <property type="evidence" value="ECO:0007669"/>
    <property type="project" value="InterPro"/>
</dbReference>
<dbReference type="GO" id="GO:0003735">
    <property type="term" value="F:structural constituent of ribosome"/>
    <property type="evidence" value="ECO:0007669"/>
    <property type="project" value="InterPro"/>
</dbReference>
<dbReference type="GO" id="GO:0006412">
    <property type="term" value="P:translation"/>
    <property type="evidence" value="ECO:0007669"/>
    <property type="project" value="UniProtKB-UniRule"/>
</dbReference>
<dbReference type="Gene3D" id="1.20.5.640">
    <property type="entry name" value="Single helix bin"/>
    <property type="match status" value="1"/>
</dbReference>
<dbReference type="HAMAP" id="MF_00340">
    <property type="entry name" value="Ribosomal_bL32"/>
    <property type="match status" value="1"/>
</dbReference>
<dbReference type="InterPro" id="IPR002677">
    <property type="entry name" value="Ribosomal_bL32"/>
</dbReference>
<dbReference type="InterPro" id="IPR044957">
    <property type="entry name" value="Ribosomal_bL32_bact"/>
</dbReference>
<dbReference type="InterPro" id="IPR011332">
    <property type="entry name" value="Ribosomal_zn-bd"/>
</dbReference>
<dbReference type="NCBIfam" id="TIGR01031">
    <property type="entry name" value="rpmF_bact"/>
    <property type="match status" value="1"/>
</dbReference>
<dbReference type="PANTHER" id="PTHR35534">
    <property type="entry name" value="50S RIBOSOMAL PROTEIN L32"/>
    <property type="match status" value="1"/>
</dbReference>
<dbReference type="PANTHER" id="PTHR35534:SF1">
    <property type="entry name" value="LARGE RIBOSOMAL SUBUNIT PROTEIN BL32"/>
    <property type="match status" value="1"/>
</dbReference>
<dbReference type="Pfam" id="PF01783">
    <property type="entry name" value="Ribosomal_L32p"/>
    <property type="match status" value="1"/>
</dbReference>
<dbReference type="SUPFAM" id="SSF57829">
    <property type="entry name" value="Zn-binding ribosomal proteins"/>
    <property type="match status" value="1"/>
</dbReference>
<name>RL32_NEOSM</name>
<accession>Q2GDD5</accession>
<evidence type="ECO:0000255" key="1">
    <source>
        <dbReference type="HAMAP-Rule" id="MF_00340"/>
    </source>
</evidence>
<evidence type="ECO:0000256" key="2">
    <source>
        <dbReference type="SAM" id="MobiDB-lite"/>
    </source>
</evidence>
<evidence type="ECO:0000305" key="3"/>
<feature type="chain" id="PRO_0000296514" description="Large ribosomal subunit protein bL32">
    <location>
        <begin position="1"/>
        <end position="63"/>
    </location>
</feature>
<feature type="region of interest" description="Disordered" evidence="2">
    <location>
        <begin position="1"/>
        <end position="26"/>
    </location>
</feature>
<feature type="compositionally biased region" description="Basic residues" evidence="2">
    <location>
        <begin position="1"/>
        <end position="18"/>
    </location>
</feature>
<protein>
    <recommendedName>
        <fullName evidence="1">Large ribosomal subunit protein bL32</fullName>
    </recommendedName>
    <alternativeName>
        <fullName evidence="3">50S ribosomal protein L32</fullName>
    </alternativeName>
</protein>
<reference key="1">
    <citation type="journal article" date="2006" name="PLoS Genet.">
        <title>Comparative genomics of emerging human ehrlichiosis agents.</title>
        <authorList>
            <person name="Dunning Hotopp J.C."/>
            <person name="Lin M."/>
            <person name="Madupu R."/>
            <person name="Crabtree J."/>
            <person name="Angiuoli S.V."/>
            <person name="Eisen J.A."/>
            <person name="Seshadri R."/>
            <person name="Ren Q."/>
            <person name="Wu M."/>
            <person name="Utterback T.R."/>
            <person name="Smith S."/>
            <person name="Lewis M."/>
            <person name="Khouri H."/>
            <person name="Zhang C."/>
            <person name="Niu H."/>
            <person name="Lin Q."/>
            <person name="Ohashi N."/>
            <person name="Zhi N."/>
            <person name="Nelson W.C."/>
            <person name="Brinkac L.M."/>
            <person name="Dodson R.J."/>
            <person name="Rosovitz M.J."/>
            <person name="Sundaram J.P."/>
            <person name="Daugherty S.C."/>
            <person name="Davidsen T."/>
            <person name="Durkin A.S."/>
            <person name="Gwinn M.L."/>
            <person name="Haft D.H."/>
            <person name="Selengut J.D."/>
            <person name="Sullivan S.A."/>
            <person name="Zafar N."/>
            <person name="Zhou L."/>
            <person name="Benahmed F."/>
            <person name="Forberger H."/>
            <person name="Halpin R."/>
            <person name="Mulligan S."/>
            <person name="Robinson J."/>
            <person name="White O."/>
            <person name="Rikihisa Y."/>
            <person name="Tettelin H."/>
        </authorList>
    </citation>
    <scope>NUCLEOTIDE SEQUENCE [LARGE SCALE GENOMIC DNA]</scope>
    <source>
        <strain>ATCC VR-367 / Miyayama</strain>
    </source>
</reference>
<comment type="similarity">
    <text evidence="1">Belongs to the bacterial ribosomal protein bL32 family.</text>
</comment>
<organism>
    <name type="scientific">Neorickettsia sennetsu (strain ATCC VR-367 / Miyayama)</name>
    <name type="common">Ehrlichia sennetsu</name>
    <dbReference type="NCBI Taxonomy" id="222891"/>
    <lineage>
        <taxon>Bacteria</taxon>
        <taxon>Pseudomonadati</taxon>
        <taxon>Pseudomonadota</taxon>
        <taxon>Alphaproteobacteria</taxon>
        <taxon>Rickettsiales</taxon>
        <taxon>Anaplasmataceae</taxon>
        <taxon>Neorickettsia</taxon>
    </lineage>
</organism>
<keyword id="KW-0687">Ribonucleoprotein</keyword>
<keyword id="KW-0689">Ribosomal protein</keyword>
<proteinExistence type="inferred from homology"/>
<gene>
    <name evidence="1" type="primary">rpmF</name>
    <name type="ordered locus">NSE_0633</name>
</gene>